<reference key="1">
    <citation type="journal article" date="2003" name="Proc. Natl. Acad. Sci. U.S.A.">
        <title>Complete genome sequence of Lactobacillus plantarum WCFS1.</title>
        <authorList>
            <person name="Kleerebezem M."/>
            <person name="Boekhorst J."/>
            <person name="van Kranenburg R."/>
            <person name="Molenaar D."/>
            <person name="Kuipers O.P."/>
            <person name="Leer R."/>
            <person name="Tarchini R."/>
            <person name="Peters S.A."/>
            <person name="Sandbrink H.M."/>
            <person name="Fiers M.W.E.J."/>
            <person name="Stiekema W."/>
            <person name="Klein Lankhorst R.M."/>
            <person name="Bron P.A."/>
            <person name="Hoffer S.M."/>
            <person name="Nierop Groot M.N."/>
            <person name="Kerkhoven R."/>
            <person name="De Vries M."/>
            <person name="Ursing B."/>
            <person name="De Vos W.M."/>
            <person name="Siezen R.J."/>
        </authorList>
    </citation>
    <scope>NUCLEOTIDE SEQUENCE [LARGE SCALE GENOMIC DNA]</scope>
    <source>
        <strain>ATCC BAA-793 / NCIMB 8826 / WCFS1</strain>
    </source>
</reference>
<reference key="2">
    <citation type="journal article" date="2012" name="J. Bacteriol.">
        <title>Complete resequencing and reannotation of the Lactobacillus plantarum WCFS1 genome.</title>
        <authorList>
            <person name="Siezen R.J."/>
            <person name="Francke C."/>
            <person name="Renckens B."/>
            <person name="Boekhorst J."/>
            <person name="Wels M."/>
            <person name="Kleerebezem M."/>
            <person name="van Hijum S.A."/>
        </authorList>
    </citation>
    <scope>NUCLEOTIDE SEQUENCE [LARGE SCALE GENOMIC DNA]</scope>
    <scope>GENOME REANNOTATION</scope>
    <source>
        <strain>ATCC BAA-793 / NCIMB 8826 / WCFS1</strain>
    </source>
</reference>
<feature type="chain" id="PRO_0000174536" description="S-adenosylmethionine synthase">
    <location>
        <begin position="1"/>
        <end position="395"/>
    </location>
</feature>
<feature type="region of interest" description="Flexible loop" evidence="1">
    <location>
        <begin position="100"/>
        <end position="110"/>
    </location>
</feature>
<feature type="binding site" description="in other chain" evidence="1">
    <location>
        <position position="16"/>
    </location>
    <ligand>
        <name>ATP</name>
        <dbReference type="ChEBI" id="CHEBI:30616"/>
        <note>ligand shared between two neighboring subunits</note>
    </ligand>
</feature>
<feature type="binding site" evidence="1">
    <location>
        <position position="18"/>
    </location>
    <ligand>
        <name>Mg(2+)</name>
        <dbReference type="ChEBI" id="CHEBI:18420"/>
    </ligand>
</feature>
<feature type="binding site" evidence="1">
    <location>
        <position position="44"/>
    </location>
    <ligand>
        <name>K(+)</name>
        <dbReference type="ChEBI" id="CHEBI:29103"/>
    </ligand>
</feature>
<feature type="binding site" description="in other chain" evidence="1">
    <location>
        <position position="57"/>
    </location>
    <ligand>
        <name>L-methionine</name>
        <dbReference type="ChEBI" id="CHEBI:57844"/>
        <note>ligand shared between two neighboring subunits</note>
    </ligand>
</feature>
<feature type="binding site" description="in other chain" evidence="1">
    <location>
        <position position="100"/>
    </location>
    <ligand>
        <name>L-methionine</name>
        <dbReference type="ChEBI" id="CHEBI:57844"/>
        <note>ligand shared between two neighboring subunits</note>
    </ligand>
</feature>
<feature type="binding site" description="in other chain" evidence="1">
    <location>
        <begin position="174"/>
        <end position="176"/>
    </location>
    <ligand>
        <name>ATP</name>
        <dbReference type="ChEBI" id="CHEBI:30616"/>
        <note>ligand shared between two neighboring subunits</note>
    </ligand>
</feature>
<feature type="binding site" description="in other chain" evidence="1">
    <location>
        <begin position="241"/>
        <end position="242"/>
    </location>
    <ligand>
        <name>ATP</name>
        <dbReference type="ChEBI" id="CHEBI:30616"/>
        <note>ligand shared between two neighboring subunits</note>
    </ligand>
</feature>
<feature type="binding site" evidence="1">
    <location>
        <position position="250"/>
    </location>
    <ligand>
        <name>ATP</name>
        <dbReference type="ChEBI" id="CHEBI:30616"/>
        <note>ligand shared between two neighboring subunits</note>
    </ligand>
</feature>
<feature type="binding site" evidence="1">
    <location>
        <position position="250"/>
    </location>
    <ligand>
        <name>L-methionine</name>
        <dbReference type="ChEBI" id="CHEBI:57844"/>
        <note>ligand shared between two neighboring subunits</note>
    </ligand>
</feature>
<feature type="binding site" description="in other chain" evidence="1">
    <location>
        <begin position="256"/>
        <end position="257"/>
    </location>
    <ligand>
        <name>ATP</name>
        <dbReference type="ChEBI" id="CHEBI:30616"/>
        <note>ligand shared between two neighboring subunits</note>
    </ligand>
</feature>
<feature type="binding site" evidence="1">
    <location>
        <position position="273"/>
    </location>
    <ligand>
        <name>ATP</name>
        <dbReference type="ChEBI" id="CHEBI:30616"/>
        <note>ligand shared between two neighboring subunits</note>
    </ligand>
</feature>
<feature type="binding site" evidence="1">
    <location>
        <position position="277"/>
    </location>
    <ligand>
        <name>ATP</name>
        <dbReference type="ChEBI" id="CHEBI:30616"/>
        <note>ligand shared between two neighboring subunits</note>
    </ligand>
</feature>
<feature type="binding site" description="in other chain" evidence="1">
    <location>
        <position position="281"/>
    </location>
    <ligand>
        <name>L-methionine</name>
        <dbReference type="ChEBI" id="CHEBI:57844"/>
        <note>ligand shared between two neighboring subunits</note>
    </ligand>
</feature>
<feature type="strand" evidence="2">
    <location>
        <begin position="5"/>
        <end position="12"/>
    </location>
</feature>
<feature type="helix" evidence="2">
    <location>
        <begin position="17"/>
        <end position="33"/>
    </location>
</feature>
<feature type="strand" evidence="2">
    <location>
        <begin position="40"/>
        <end position="48"/>
    </location>
</feature>
<feature type="strand" evidence="2">
    <location>
        <begin position="51"/>
        <end position="59"/>
    </location>
</feature>
<feature type="helix" evidence="2">
    <location>
        <begin position="66"/>
        <end position="77"/>
    </location>
</feature>
<feature type="strand" evidence="2">
    <location>
        <begin position="81"/>
        <end position="85"/>
    </location>
</feature>
<feature type="turn" evidence="2">
    <location>
        <begin position="88"/>
        <end position="90"/>
    </location>
</feature>
<feature type="strand" evidence="2">
    <location>
        <begin position="91"/>
        <end position="98"/>
    </location>
</feature>
<feature type="strand" evidence="2">
    <location>
        <begin position="132"/>
        <end position="138"/>
    </location>
</feature>
<feature type="helix" evidence="2">
    <location>
        <begin position="147"/>
        <end position="164"/>
    </location>
</feature>
<feature type="strand" evidence="2">
    <location>
        <begin position="171"/>
        <end position="183"/>
    </location>
</feature>
<feature type="strand" evidence="2">
    <location>
        <begin position="189"/>
        <end position="201"/>
    </location>
</feature>
<feature type="helix" evidence="2">
    <location>
        <begin position="207"/>
        <end position="217"/>
    </location>
</feature>
<feature type="turn" evidence="2">
    <location>
        <begin position="218"/>
        <end position="222"/>
    </location>
</feature>
<feature type="helix" evidence="2">
    <location>
        <begin position="225"/>
        <end position="227"/>
    </location>
</feature>
<feature type="strand" evidence="2">
    <location>
        <begin position="233"/>
        <end position="237"/>
    </location>
</feature>
<feature type="turn" evidence="2">
    <location>
        <begin position="246"/>
        <end position="249"/>
    </location>
</feature>
<feature type="helix" evidence="2">
    <location>
        <begin position="258"/>
        <end position="261"/>
    </location>
</feature>
<feature type="turn" evidence="2">
    <location>
        <begin position="262"/>
        <end position="265"/>
    </location>
</feature>
<feature type="helix" evidence="2">
    <location>
        <begin position="282"/>
        <end position="299"/>
    </location>
</feature>
<feature type="strand" evidence="2">
    <location>
        <begin position="304"/>
        <end position="311"/>
    </location>
</feature>
<feature type="strand" evidence="2">
    <location>
        <begin position="320"/>
        <end position="325"/>
    </location>
</feature>
<feature type="helix" evidence="2">
    <location>
        <begin position="334"/>
        <end position="344"/>
    </location>
</feature>
<feature type="helix" evidence="2">
    <location>
        <begin position="349"/>
        <end position="356"/>
    </location>
</feature>
<feature type="strand" evidence="2">
    <location>
        <begin position="359"/>
        <end position="361"/>
    </location>
</feature>
<feature type="helix" evidence="2">
    <location>
        <begin position="364"/>
        <end position="366"/>
    </location>
</feature>
<feature type="strand" evidence="2">
    <location>
        <begin position="367"/>
        <end position="369"/>
    </location>
</feature>
<feature type="strand" evidence="2">
    <location>
        <begin position="371"/>
        <end position="373"/>
    </location>
</feature>
<feature type="strand" evidence="2">
    <location>
        <begin position="375"/>
        <end position="377"/>
    </location>
</feature>
<feature type="helix" evidence="2">
    <location>
        <begin position="380"/>
        <end position="382"/>
    </location>
</feature>
<feature type="helix" evidence="2">
    <location>
        <begin position="387"/>
        <end position="392"/>
    </location>
</feature>
<gene>
    <name evidence="1" type="primary">metK</name>
    <name type="ordered locus">lp_1301</name>
</gene>
<name>METK_LACPL</name>
<sequence>MSERHLFTSESVSEGHPDKIADQISDAILDAMLAQDPQARVAVETSVTTGLVLVFGEVSTKAYVDIQKVVRDTIKSIGYVDGQYGFDGDNCAVLVSLDEQSPDIAQGVDDSLETRSGDADPLDQIGAGDQGMMFGYAINETPELMPLPIALSHRLMRKIAALRKDGTIKWLRPDAKAQVTVEYDEDNQPKRIDTVVLSTQHDPDVDLDTIRQTVIDQVIKAVLPADLLDDQTKYLVNPTGRFVIGGPQGDAGLTGRKVIVDTYGGFAHHGGGAFSGKDATKVDRSASYAARYIAKNVVAAGLADQVEVQLAYAIGVAEPVSIAVDTAGTGKVSDEALINAIRENFDLRPAGIIKMLDLQRPIYRQTAAYGHFGRTDIDLPWEHTDKVDALKAVFK</sequence>
<evidence type="ECO:0000255" key="1">
    <source>
        <dbReference type="HAMAP-Rule" id="MF_00086"/>
    </source>
</evidence>
<evidence type="ECO:0007829" key="2">
    <source>
        <dbReference type="PDB" id="7R3B"/>
    </source>
</evidence>
<dbReference type="EC" id="2.5.1.6" evidence="1"/>
<dbReference type="EMBL" id="AL935263">
    <property type="protein sequence ID" value="CCC78669.1"/>
    <property type="molecule type" value="Genomic_DNA"/>
</dbReference>
<dbReference type="RefSeq" id="WP_011101345.1">
    <property type="nucleotide sequence ID" value="NC_004567.2"/>
</dbReference>
<dbReference type="RefSeq" id="YP_004889183.1">
    <property type="nucleotide sequence ID" value="NC_004567.2"/>
</dbReference>
<dbReference type="PDB" id="7R3B">
    <property type="method" value="X-ray"/>
    <property type="resolution" value="2.82 A"/>
    <property type="chains" value="A/B/C/D/E/F/G/H=1-395"/>
</dbReference>
<dbReference type="PDBsum" id="7R3B"/>
<dbReference type="SMR" id="Q88XB8"/>
<dbReference type="STRING" id="220668.lp_1301"/>
<dbReference type="EnsemblBacteria" id="CCC78669">
    <property type="protein sequence ID" value="CCC78669"/>
    <property type="gene ID" value="lp_1301"/>
</dbReference>
<dbReference type="KEGG" id="lpl:lp_1301"/>
<dbReference type="PATRIC" id="fig|220668.9.peg.1101"/>
<dbReference type="eggNOG" id="COG0192">
    <property type="taxonomic scope" value="Bacteria"/>
</dbReference>
<dbReference type="HOGENOM" id="CLU_041802_1_1_9"/>
<dbReference type="OrthoDB" id="9801686at2"/>
<dbReference type="PhylomeDB" id="Q88XB8"/>
<dbReference type="UniPathway" id="UPA00315">
    <property type="reaction ID" value="UER00080"/>
</dbReference>
<dbReference type="Proteomes" id="UP000000432">
    <property type="component" value="Chromosome"/>
</dbReference>
<dbReference type="GO" id="GO:0005737">
    <property type="term" value="C:cytoplasm"/>
    <property type="evidence" value="ECO:0007669"/>
    <property type="project" value="UniProtKB-SubCell"/>
</dbReference>
<dbReference type="GO" id="GO:0005524">
    <property type="term" value="F:ATP binding"/>
    <property type="evidence" value="ECO:0007669"/>
    <property type="project" value="UniProtKB-UniRule"/>
</dbReference>
<dbReference type="GO" id="GO:0000287">
    <property type="term" value="F:magnesium ion binding"/>
    <property type="evidence" value="ECO:0007669"/>
    <property type="project" value="UniProtKB-UniRule"/>
</dbReference>
<dbReference type="GO" id="GO:0004478">
    <property type="term" value="F:methionine adenosyltransferase activity"/>
    <property type="evidence" value="ECO:0007669"/>
    <property type="project" value="UniProtKB-UniRule"/>
</dbReference>
<dbReference type="GO" id="GO:0006730">
    <property type="term" value="P:one-carbon metabolic process"/>
    <property type="evidence" value="ECO:0007669"/>
    <property type="project" value="UniProtKB-KW"/>
</dbReference>
<dbReference type="GO" id="GO:0006556">
    <property type="term" value="P:S-adenosylmethionine biosynthetic process"/>
    <property type="evidence" value="ECO:0007669"/>
    <property type="project" value="UniProtKB-UniRule"/>
</dbReference>
<dbReference type="CDD" id="cd18079">
    <property type="entry name" value="S-AdoMet_synt"/>
    <property type="match status" value="1"/>
</dbReference>
<dbReference type="FunFam" id="3.30.300.10:FF:000003">
    <property type="entry name" value="S-adenosylmethionine synthase"/>
    <property type="match status" value="1"/>
</dbReference>
<dbReference type="FunFam" id="3.30.300.10:FF:000004">
    <property type="entry name" value="S-adenosylmethionine synthase"/>
    <property type="match status" value="1"/>
</dbReference>
<dbReference type="Gene3D" id="3.30.300.10">
    <property type="match status" value="3"/>
</dbReference>
<dbReference type="HAMAP" id="MF_00086">
    <property type="entry name" value="S_AdoMet_synth1"/>
    <property type="match status" value="1"/>
</dbReference>
<dbReference type="InterPro" id="IPR022631">
    <property type="entry name" value="ADOMET_SYNTHASE_CS"/>
</dbReference>
<dbReference type="InterPro" id="IPR022630">
    <property type="entry name" value="S-AdoMet_synt_C"/>
</dbReference>
<dbReference type="InterPro" id="IPR022629">
    <property type="entry name" value="S-AdoMet_synt_central"/>
</dbReference>
<dbReference type="InterPro" id="IPR022628">
    <property type="entry name" value="S-AdoMet_synt_N"/>
</dbReference>
<dbReference type="InterPro" id="IPR002133">
    <property type="entry name" value="S-AdoMet_synthetase"/>
</dbReference>
<dbReference type="InterPro" id="IPR022636">
    <property type="entry name" value="S-AdoMet_synthetase_sfam"/>
</dbReference>
<dbReference type="NCBIfam" id="TIGR01034">
    <property type="entry name" value="metK"/>
    <property type="match status" value="1"/>
</dbReference>
<dbReference type="PANTHER" id="PTHR11964">
    <property type="entry name" value="S-ADENOSYLMETHIONINE SYNTHETASE"/>
    <property type="match status" value="1"/>
</dbReference>
<dbReference type="Pfam" id="PF02773">
    <property type="entry name" value="S-AdoMet_synt_C"/>
    <property type="match status" value="1"/>
</dbReference>
<dbReference type="Pfam" id="PF02772">
    <property type="entry name" value="S-AdoMet_synt_M"/>
    <property type="match status" value="1"/>
</dbReference>
<dbReference type="Pfam" id="PF00438">
    <property type="entry name" value="S-AdoMet_synt_N"/>
    <property type="match status" value="1"/>
</dbReference>
<dbReference type="PIRSF" id="PIRSF000497">
    <property type="entry name" value="MAT"/>
    <property type="match status" value="1"/>
</dbReference>
<dbReference type="SUPFAM" id="SSF55973">
    <property type="entry name" value="S-adenosylmethionine synthetase"/>
    <property type="match status" value="3"/>
</dbReference>
<dbReference type="PROSITE" id="PS00376">
    <property type="entry name" value="ADOMET_SYNTHASE_1"/>
    <property type="match status" value="1"/>
</dbReference>
<dbReference type="PROSITE" id="PS00377">
    <property type="entry name" value="ADOMET_SYNTHASE_2"/>
    <property type="match status" value="1"/>
</dbReference>
<keyword id="KW-0002">3D-structure</keyword>
<keyword id="KW-0067">ATP-binding</keyword>
<keyword id="KW-0963">Cytoplasm</keyword>
<keyword id="KW-0460">Magnesium</keyword>
<keyword id="KW-0479">Metal-binding</keyword>
<keyword id="KW-0547">Nucleotide-binding</keyword>
<keyword id="KW-0554">One-carbon metabolism</keyword>
<keyword id="KW-0630">Potassium</keyword>
<keyword id="KW-1185">Reference proteome</keyword>
<keyword id="KW-0808">Transferase</keyword>
<organism>
    <name type="scientific">Lactiplantibacillus plantarum (strain ATCC BAA-793 / NCIMB 8826 / WCFS1)</name>
    <name type="common">Lactobacillus plantarum</name>
    <dbReference type="NCBI Taxonomy" id="220668"/>
    <lineage>
        <taxon>Bacteria</taxon>
        <taxon>Bacillati</taxon>
        <taxon>Bacillota</taxon>
        <taxon>Bacilli</taxon>
        <taxon>Lactobacillales</taxon>
        <taxon>Lactobacillaceae</taxon>
        <taxon>Lactiplantibacillus</taxon>
    </lineage>
</organism>
<accession>Q88XB8</accession>
<accession>F9UN80</accession>
<proteinExistence type="evidence at protein level"/>
<comment type="function">
    <text evidence="1">Catalyzes the formation of S-adenosylmethionine (AdoMet) from methionine and ATP. The overall synthetic reaction is composed of two sequential steps, AdoMet formation and the subsequent tripolyphosphate hydrolysis which occurs prior to release of AdoMet from the enzyme.</text>
</comment>
<comment type="catalytic activity">
    <reaction evidence="1">
        <text>L-methionine + ATP + H2O = S-adenosyl-L-methionine + phosphate + diphosphate</text>
        <dbReference type="Rhea" id="RHEA:21080"/>
        <dbReference type="ChEBI" id="CHEBI:15377"/>
        <dbReference type="ChEBI" id="CHEBI:30616"/>
        <dbReference type="ChEBI" id="CHEBI:33019"/>
        <dbReference type="ChEBI" id="CHEBI:43474"/>
        <dbReference type="ChEBI" id="CHEBI:57844"/>
        <dbReference type="ChEBI" id="CHEBI:59789"/>
        <dbReference type="EC" id="2.5.1.6"/>
    </reaction>
</comment>
<comment type="cofactor">
    <cofactor evidence="1">
        <name>Mg(2+)</name>
        <dbReference type="ChEBI" id="CHEBI:18420"/>
    </cofactor>
    <text evidence="1">Binds 2 divalent ions per subunit.</text>
</comment>
<comment type="cofactor">
    <cofactor evidence="1">
        <name>K(+)</name>
        <dbReference type="ChEBI" id="CHEBI:29103"/>
    </cofactor>
    <text evidence="1">Binds 1 potassium ion per subunit.</text>
</comment>
<comment type="pathway">
    <text evidence="1">Amino-acid biosynthesis; S-adenosyl-L-methionine biosynthesis; S-adenosyl-L-methionine from L-methionine: step 1/1.</text>
</comment>
<comment type="subunit">
    <text evidence="1">Homotetramer; dimer of dimers.</text>
</comment>
<comment type="subcellular location">
    <subcellularLocation>
        <location evidence="1">Cytoplasm</location>
    </subcellularLocation>
</comment>
<comment type="similarity">
    <text evidence="1">Belongs to the AdoMet synthase family.</text>
</comment>
<protein>
    <recommendedName>
        <fullName evidence="1">S-adenosylmethionine synthase</fullName>
        <shortName evidence="1">AdoMet synthase</shortName>
        <ecNumber evidence="1">2.5.1.6</ecNumber>
    </recommendedName>
    <alternativeName>
        <fullName evidence="1">MAT</fullName>
    </alternativeName>
    <alternativeName>
        <fullName evidence="1">Methionine adenosyltransferase</fullName>
    </alternativeName>
</protein>